<gene>
    <name evidence="1" type="primary">atpH</name>
    <name type="ordered locus">Dred_3153</name>
</gene>
<sequence>MLRGAVARRYAQALYEIAQEKNALEAMEQELKGVAEAIEGTRELQKVLYHPQVLPGEKKNLLKALFTDKVSDETLNFLGLVVDKRRENYIAGIAAEFSVLANEARGKVAAEVTTAIEIDEKQKQELVKVASRMAGKEVEPTFGVDPSLIGGVVVRIGSKVIDGSIKTRLATIKSRLMSKTS</sequence>
<protein>
    <recommendedName>
        <fullName evidence="1">ATP synthase subunit delta</fullName>
    </recommendedName>
    <alternativeName>
        <fullName evidence="1">ATP synthase F(1) sector subunit delta</fullName>
    </alternativeName>
    <alternativeName>
        <fullName evidence="1">F-type ATPase subunit delta</fullName>
        <shortName evidence="1">F-ATPase subunit delta</shortName>
    </alternativeName>
</protein>
<comment type="function">
    <text evidence="1">F(1)F(0) ATP synthase produces ATP from ADP in the presence of a proton or sodium gradient. F-type ATPases consist of two structural domains, F(1) containing the extramembraneous catalytic core and F(0) containing the membrane proton channel, linked together by a central stalk and a peripheral stalk. During catalysis, ATP synthesis in the catalytic domain of F(1) is coupled via a rotary mechanism of the central stalk subunits to proton translocation.</text>
</comment>
<comment type="function">
    <text evidence="1">This protein is part of the stalk that links CF(0) to CF(1). It either transmits conformational changes from CF(0) to CF(1) or is implicated in proton conduction.</text>
</comment>
<comment type="subunit">
    <text evidence="1">F-type ATPases have 2 components, F(1) - the catalytic core - and F(0) - the membrane proton channel. F(1) has five subunits: alpha(3), beta(3), gamma(1), delta(1), epsilon(1). F(0) has three main subunits: a(1), b(2) and c(10-14). The alpha and beta chains form an alternating ring which encloses part of the gamma chain. F(1) is attached to F(0) by a central stalk formed by the gamma and epsilon chains, while a peripheral stalk is formed by the delta and b chains.</text>
</comment>
<comment type="subcellular location">
    <subcellularLocation>
        <location evidence="1">Cell membrane</location>
        <topology evidence="1">Peripheral membrane protein</topology>
    </subcellularLocation>
</comment>
<comment type="similarity">
    <text evidence="1">Belongs to the ATPase delta chain family.</text>
</comment>
<name>ATPD_DESRM</name>
<keyword id="KW-0066">ATP synthesis</keyword>
<keyword id="KW-1003">Cell membrane</keyword>
<keyword id="KW-0139">CF(1)</keyword>
<keyword id="KW-0375">Hydrogen ion transport</keyword>
<keyword id="KW-0406">Ion transport</keyword>
<keyword id="KW-0472">Membrane</keyword>
<keyword id="KW-1185">Reference proteome</keyword>
<keyword id="KW-0813">Transport</keyword>
<proteinExistence type="inferred from homology"/>
<accession>A4J9A2</accession>
<feature type="chain" id="PRO_1000184692" description="ATP synthase subunit delta">
    <location>
        <begin position="1"/>
        <end position="181"/>
    </location>
</feature>
<dbReference type="EMBL" id="CP000612">
    <property type="protein sequence ID" value="ABO51655.1"/>
    <property type="molecule type" value="Genomic_DNA"/>
</dbReference>
<dbReference type="RefSeq" id="WP_011879443.1">
    <property type="nucleotide sequence ID" value="NC_009253.1"/>
</dbReference>
<dbReference type="SMR" id="A4J9A2"/>
<dbReference type="STRING" id="349161.Dred_3153"/>
<dbReference type="KEGG" id="drm:Dred_3153"/>
<dbReference type="eggNOG" id="COG0712">
    <property type="taxonomic scope" value="Bacteria"/>
</dbReference>
<dbReference type="HOGENOM" id="CLU_085114_1_1_9"/>
<dbReference type="OrthoDB" id="9802471at2"/>
<dbReference type="Proteomes" id="UP000001556">
    <property type="component" value="Chromosome"/>
</dbReference>
<dbReference type="GO" id="GO:0005886">
    <property type="term" value="C:plasma membrane"/>
    <property type="evidence" value="ECO:0007669"/>
    <property type="project" value="UniProtKB-SubCell"/>
</dbReference>
<dbReference type="GO" id="GO:0045259">
    <property type="term" value="C:proton-transporting ATP synthase complex"/>
    <property type="evidence" value="ECO:0007669"/>
    <property type="project" value="UniProtKB-KW"/>
</dbReference>
<dbReference type="GO" id="GO:0046933">
    <property type="term" value="F:proton-transporting ATP synthase activity, rotational mechanism"/>
    <property type="evidence" value="ECO:0007669"/>
    <property type="project" value="UniProtKB-UniRule"/>
</dbReference>
<dbReference type="Gene3D" id="1.10.520.20">
    <property type="entry name" value="N-terminal domain of the delta subunit of the F1F0-ATP synthase"/>
    <property type="match status" value="1"/>
</dbReference>
<dbReference type="HAMAP" id="MF_01416">
    <property type="entry name" value="ATP_synth_delta_bact"/>
    <property type="match status" value="1"/>
</dbReference>
<dbReference type="InterPro" id="IPR026015">
    <property type="entry name" value="ATP_synth_OSCP/delta_N_sf"/>
</dbReference>
<dbReference type="InterPro" id="IPR000711">
    <property type="entry name" value="ATPase_OSCP/dsu"/>
</dbReference>
<dbReference type="NCBIfam" id="TIGR01145">
    <property type="entry name" value="ATP_synt_delta"/>
    <property type="match status" value="1"/>
</dbReference>
<dbReference type="NCBIfam" id="NF004402">
    <property type="entry name" value="PRK05758.2-2"/>
    <property type="match status" value="1"/>
</dbReference>
<dbReference type="NCBIfam" id="NF004403">
    <property type="entry name" value="PRK05758.2-4"/>
    <property type="match status" value="1"/>
</dbReference>
<dbReference type="PANTHER" id="PTHR11910">
    <property type="entry name" value="ATP SYNTHASE DELTA CHAIN"/>
    <property type="match status" value="1"/>
</dbReference>
<dbReference type="Pfam" id="PF00213">
    <property type="entry name" value="OSCP"/>
    <property type="match status" value="1"/>
</dbReference>
<dbReference type="PRINTS" id="PR00125">
    <property type="entry name" value="ATPASEDELTA"/>
</dbReference>
<dbReference type="SUPFAM" id="SSF47928">
    <property type="entry name" value="N-terminal domain of the delta subunit of the F1F0-ATP synthase"/>
    <property type="match status" value="1"/>
</dbReference>
<organism>
    <name type="scientific">Desulforamulus reducens (strain ATCC BAA-1160 / DSM 100696 / MI-1)</name>
    <name type="common">Desulfotomaculum reducens</name>
    <dbReference type="NCBI Taxonomy" id="349161"/>
    <lineage>
        <taxon>Bacteria</taxon>
        <taxon>Bacillati</taxon>
        <taxon>Bacillota</taxon>
        <taxon>Clostridia</taxon>
        <taxon>Eubacteriales</taxon>
        <taxon>Peptococcaceae</taxon>
        <taxon>Desulforamulus</taxon>
    </lineage>
</organism>
<reference key="1">
    <citation type="submission" date="2007-03" db="EMBL/GenBank/DDBJ databases">
        <title>Complete sequence of Desulfotomaculum reducens MI-1.</title>
        <authorList>
            <consortium name="US DOE Joint Genome Institute"/>
            <person name="Copeland A."/>
            <person name="Lucas S."/>
            <person name="Lapidus A."/>
            <person name="Barry K."/>
            <person name="Detter J.C."/>
            <person name="Glavina del Rio T."/>
            <person name="Hammon N."/>
            <person name="Israni S."/>
            <person name="Dalin E."/>
            <person name="Tice H."/>
            <person name="Pitluck S."/>
            <person name="Sims D."/>
            <person name="Brettin T."/>
            <person name="Bruce D."/>
            <person name="Han C."/>
            <person name="Tapia R."/>
            <person name="Schmutz J."/>
            <person name="Larimer F."/>
            <person name="Land M."/>
            <person name="Hauser L."/>
            <person name="Kyrpides N."/>
            <person name="Kim E."/>
            <person name="Tebo B.M."/>
            <person name="Richardson P."/>
        </authorList>
    </citation>
    <scope>NUCLEOTIDE SEQUENCE [LARGE SCALE GENOMIC DNA]</scope>
    <source>
        <strain>ATCC BAA-1160 / DSM 100696 / MI-1</strain>
    </source>
</reference>
<evidence type="ECO:0000255" key="1">
    <source>
        <dbReference type="HAMAP-Rule" id="MF_01416"/>
    </source>
</evidence>